<comment type="function">
    <text evidence="1">Catalyzes the isomerization between 2-isopropylmalate and 3-isopropylmalate, via the formation of 2-isopropylmaleate.</text>
</comment>
<comment type="catalytic activity">
    <reaction evidence="1">
        <text>(2R,3S)-3-isopropylmalate = (2S)-2-isopropylmalate</text>
        <dbReference type="Rhea" id="RHEA:32287"/>
        <dbReference type="ChEBI" id="CHEBI:1178"/>
        <dbReference type="ChEBI" id="CHEBI:35121"/>
        <dbReference type="EC" id="4.2.1.33"/>
    </reaction>
</comment>
<comment type="pathway">
    <text evidence="1">Amino-acid biosynthesis; L-leucine biosynthesis; L-leucine from 3-methyl-2-oxobutanoate: step 2/4.</text>
</comment>
<comment type="subunit">
    <text evidence="1">Heterodimer of LeuC and LeuD.</text>
</comment>
<comment type="similarity">
    <text evidence="1">Belongs to the LeuD family. LeuD type 1 subfamily.</text>
</comment>
<reference key="1">
    <citation type="journal article" date="2014" name="Stand. Genomic Sci.">
        <title>Complete genome sequence of Burkholderia phymatum STM815(T), a broad host range and efficient nitrogen-fixing symbiont of Mimosa species.</title>
        <authorList>
            <person name="Moulin L."/>
            <person name="Klonowska A."/>
            <person name="Caroline B."/>
            <person name="Booth K."/>
            <person name="Vriezen J.A."/>
            <person name="Melkonian R."/>
            <person name="James E.K."/>
            <person name="Young J.P."/>
            <person name="Bena G."/>
            <person name="Hauser L."/>
            <person name="Land M."/>
            <person name="Kyrpides N."/>
            <person name="Bruce D."/>
            <person name="Chain P."/>
            <person name="Copeland A."/>
            <person name="Pitluck S."/>
            <person name="Woyke T."/>
            <person name="Lizotte-Waniewski M."/>
            <person name="Bristow J."/>
            <person name="Riley M."/>
        </authorList>
    </citation>
    <scope>NUCLEOTIDE SEQUENCE [LARGE SCALE GENOMIC DNA]</scope>
    <source>
        <strain>DSM 17167 / CIP 108236 / LMG 21445 / STM815</strain>
    </source>
</reference>
<accession>B2JQE2</accession>
<keyword id="KW-0028">Amino-acid biosynthesis</keyword>
<keyword id="KW-0100">Branched-chain amino acid biosynthesis</keyword>
<keyword id="KW-0432">Leucine biosynthesis</keyword>
<keyword id="KW-0456">Lyase</keyword>
<keyword id="KW-1185">Reference proteome</keyword>
<name>LEUD_PARP8</name>
<evidence type="ECO:0000255" key="1">
    <source>
        <dbReference type="HAMAP-Rule" id="MF_01031"/>
    </source>
</evidence>
<sequence length="217" mass="24914">MDKFIVHTGVVAPLDRENVDTDAIIPKQFLKSIKRTGFGPNAFDEWRYLDHGEPGQDNSKRPLNPDFVLNQPRYQGASILLTRQNFGCGSSREHAPWALQQYGFRAIIAPSFADIFYNNCFKNGLLPIVLTEQQVDHLFNETFAFNGFQLTVDLEKQVVRTTDGGTEYPFEVAAFRKYCLLNGFDDIGLTLRHADKIRQYEAERIAKQPWLNNRLVR</sequence>
<protein>
    <recommendedName>
        <fullName evidence="1">3-isopropylmalate dehydratase small subunit</fullName>
        <ecNumber evidence="1">4.2.1.33</ecNumber>
    </recommendedName>
    <alternativeName>
        <fullName evidence="1">Alpha-IPM isomerase</fullName>
        <shortName evidence="1">IPMI</shortName>
    </alternativeName>
    <alternativeName>
        <fullName evidence="1">Isopropylmalate isomerase</fullName>
    </alternativeName>
</protein>
<dbReference type="EC" id="4.2.1.33" evidence="1"/>
<dbReference type="EMBL" id="CP001044">
    <property type="protein sequence ID" value="ACC73483.1"/>
    <property type="molecule type" value="Genomic_DNA"/>
</dbReference>
<dbReference type="RefSeq" id="WP_012403656.1">
    <property type="nucleotide sequence ID" value="NC_010623.1"/>
</dbReference>
<dbReference type="SMR" id="B2JQE2"/>
<dbReference type="STRING" id="391038.Bphy_4368"/>
<dbReference type="KEGG" id="bph:Bphy_4368"/>
<dbReference type="eggNOG" id="COG0066">
    <property type="taxonomic scope" value="Bacteria"/>
</dbReference>
<dbReference type="HOGENOM" id="CLU_081378_0_3_4"/>
<dbReference type="OrthoDB" id="9777465at2"/>
<dbReference type="UniPathway" id="UPA00048">
    <property type="reaction ID" value="UER00071"/>
</dbReference>
<dbReference type="Proteomes" id="UP000001192">
    <property type="component" value="Chromosome 2"/>
</dbReference>
<dbReference type="GO" id="GO:0009316">
    <property type="term" value="C:3-isopropylmalate dehydratase complex"/>
    <property type="evidence" value="ECO:0007669"/>
    <property type="project" value="InterPro"/>
</dbReference>
<dbReference type="GO" id="GO:0003861">
    <property type="term" value="F:3-isopropylmalate dehydratase activity"/>
    <property type="evidence" value="ECO:0007669"/>
    <property type="project" value="UniProtKB-UniRule"/>
</dbReference>
<dbReference type="GO" id="GO:0009098">
    <property type="term" value="P:L-leucine biosynthetic process"/>
    <property type="evidence" value="ECO:0007669"/>
    <property type="project" value="UniProtKB-UniRule"/>
</dbReference>
<dbReference type="CDD" id="cd01577">
    <property type="entry name" value="IPMI_Swivel"/>
    <property type="match status" value="1"/>
</dbReference>
<dbReference type="FunFam" id="3.20.19.10:FF:000003">
    <property type="entry name" value="3-isopropylmalate dehydratase small subunit"/>
    <property type="match status" value="1"/>
</dbReference>
<dbReference type="Gene3D" id="3.20.19.10">
    <property type="entry name" value="Aconitase, domain 4"/>
    <property type="match status" value="1"/>
</dbReference>
<dbReference type="HAMAP" id="MF_01031">
    <property type="entry name" value="LeuD_type1"/>
    <property type="match status" value="1"/>
</dbReference>
<dbReference type="InterPro" id="IPR004431">
    <property type="entry name" value="3-IsopropMal_deHydase_ssu"/>
</dbReference>
<dbReference type="InterPro" id="IPR015928">
    <property type="entry name" value="Aconitase/3IPM_dehydase_swvl"/>
</dbReference>
<dbReference type="InterPro" id="IPR000573">
    <property type="entry name" value="AconitaseA/IPMdHydase_ssu_swvl"/>
</dbReference>
<dbReference type="InterPro" id="IPR033940">
    <property type="entry name" value="IPMI_Swivel"/>
</dbReference>
<dbReference type="InterPro" id="IPR050075">
    <property type="entry name" value="LeuD"/>
</dbReference>
<dbReference type="NCBIfam" id="TIGR00171">
    <property type="entry name" value="leuD"/>
    <property type="match status" value="1"/>
</dbReference>
<dbReference type="NCBIfam" id="NF002458">
    <property type="entry name" value="PRK01641.1"/>
    <property type="match status" value="1"/>
</dbReference>
<dbReference type="PANTHER" id="PTHR43345:SF5">
    <property type="entry name" value="3-ISOPROPYLMALATE DEHYDRATASE SMALL SUBUNIT"/>
    <property type="match status" value="1"/>
</dbReference>
<dbReference type="PANTHER" id="PTHR43345">
    <property type="entry name" value="3-ISOPROPYLMALATE DEHYDRATASE SMALL SUBUNIT 2-RELATED-RELATED"/>
    <property type="match status" value="1"/>
</dbReference>
<dbReference type="Pfam" id="PF00694">
    <property type="entry name" value="Aconitase_C"/>
    <property type="match status" value="1"/>
</dbReference>
<dbReference type="SUPFAM" id="SSF52016">
    <property type="entry name" value="LeuD/IlvD-like"/>
    <property type="match status" value="1"/>
</dbReference>
<gene>
    <name evidence="1" type="primary">leuD</name>
    <name type="ordered locus">Bphy_4368</name>
</gene>
<organism>
    <name type="scientific">Paraburkholderia phymatum (strain DSM 17167 / CIP 108236 / LMG 21445 / STM815)</name>
    <name type="common">Burkholderia phymatum</name>
    <dbReference type="NCBI Taxonomy" id="391038"/>
    <lineage>
        <taxon>Bacteria</taxon>
        <taxon>Pseudomonadati</taxon>
        <taxon>Pseudomonadota</taxon>
        <taxon>Betaproteobacteria</taxon>
        <taxon>Burkholderiales</taxon>
        <taxon>Burkholderiaceae</taxon>
        <taxon>Paraburkholderia</taxon>
    </lineage>
</organism>
<proteinExistence type="inferred from homology"/>
<feature type="chain" id="PRO_1000135797" description="3-isopropylmalate dehydratase small subunit">
    <location>
        <begin position="1"/>
        <end position="217"/>
    </location>
</feature>